<evidence type="ECO:0000305" key="1"/>
<protein>
    <recommendedName>
        <fullName>Putative uncharacterized protein encoded by LINC00173</fullName>
    </recommendedName>
</protein>
<comment type="caution">
    <text evidence="1">Product of a dubious CDS prediction. Probable non-coding RNA.</text>
</comment>
<keyword id="KW-1185">Reference proteome</keyword>
<organism>
    <name type="scientific">Homo sapiens</name>
    <name type="common">Human</name>
    <dbReference type="NCBI Taxonomy" id="9606"/>
    <lineage>
        <taxon>Eukaryota</taxon>
        <taxon>Metazoa</taxon>
        <taxon>Chordata</taxon>
        <taxon>Craniata</taxon>
        <taxon>Vertebrata</taxon>
        <taxon>Euteleostomi</taxon>
        <taxon>Mammalia</taxon>
        <taxon>Eutheria</taxon>
        <taxon>Euarchontoglires</taxon>
        <taxon>Primates</taxon>
        <taxon>Haplorrhini</taxon>
        <taxon>Catarrhini</taxon>
        <taxon>Hominidae</taxon>
        <taxon>Homo</taxon>
    </lineage>
</organism>
<gene>
    <name type="primary">LINC00173</name>
    <name type="synonym">NCRNA00173</name>
</gene>
<proteinExistence type="uncertain"/>
<sequence>MSFSPYSTMITVCVCFNSRVQLTVPSFTAWLRSRYSKALFMVLRRAAQEKDKGVCQGWHCVKKWACKGRIPGQPLQPQPLGPYLRSLSQHPATQTPRPQARASSRYLELHRSQNRGGSEFKFWFCYCLIACCRDSISSSGKWE</sequence>
<accession>Q6ZV60</accession>
<feature type="chain" id="PRO_0000348459" description="Putative uncharacterized protein encoded by LINC00173">
    <location>
        <begin position="1"/>
        <end position="143"/>
    </location>
</feature>
<name>YL023_HUMAN</name>
<reference key="1">
    <citation type="journal article" date="2004" name="Nat. Genet.">
        <title>Complete sequencing and characterization of 21,243 full-length human cDNAs.</title>
        <authorList>
            <person name="Ota T."/>
            <person name="Suzuki Y."/>
            <person name="Nishikawa T."/>
            <person name="Otsuki T."/>
            <person name="Sugiyama T."/>
            <person name="Irie R."/>
            <person name="Wakamatsu A."/>
            <person name="Hayashi K."/>
            <person name="Sato H."/>
            <person name="Nagai K."/>
            <person name="Kimura K."/>
            <person name="Makita H."/>
            <person name="Sekine M."/>
            <person name="Obayashi M."/>
            <person name="Nishi T."/>
            <person name="Shibahara T."/>
            <person name="Tanaka T."/>
            <person name="Ishii S."/>
            <person name="Yamamoto J."/>
            <person name="Saito K."/>
            <person name="Kawai Y."/>
            <person name="Isono Y."/>
            <person name="Nakamura Y."/>
            <person name="Nagahari K."/>
            <person name="Murakami K."/>
            <person name="Yasuda T."/>
            <person name="Iwayanagi T."/>
            <person name="Wagatsuma M."/>
            <person name="Shiratori A."/>
            <person name="Sudo H."/>
            <person name="Hosoiri T."/>
            <person name="Kaku Y."/>
            <person name="Kodaira H."/>
            <person name="Kondo H."/>
            <person name="Sugawara M."/>
            <person name="Takahashi M."/>
            <person name="Kanda K."/>
            <person name="Yokoi T."/>
            <person name="Furuya T."/>
            <person name="Kikkawa E."/>
            <person name="Omura Y."/>
            <person name="Abe K."/>
            <person name="Kamihara K."/>
            <person name="Katsuta N."/>
            <person name="Sato K."/>
            <person name="Tanikawa M."/>
            <person name="Yamazaki M."/>
            <person name="Ninomiya K."/>
            <person name="Ishibashi T."/>
            <person name="Yamashita H."/>
            <person name="Murakawa K."/>
            <person name="Fujimori K."/>
            <person name="Tanai H."/>
            <person name="Kimata M."/>
            <person name="Watanabe M."/>
            <person name="Hiraoka S."/>
            <person name="Chiba Y."/>
            <person name="Ishida S."/>
            <person name="Ono Y."/>
            <person name="Takiguchi S."/>
            <person name="Watanabe S."/>
            <person name="Yosida M."/>
            <person name="Hotuta T."/>
            <person name="Kusano J."/>
            <person name="Kanehori K."/>
            <person name="Takahashi-Fujii A."/>
            <person name="Hara H."/>
            <person name="Tanase T.-O."/>
            <person name="Nomura Y."/>
            <person name="Togiya S."/>
            <person name="Komai F."/>
            <person name="Hara R."/>
            <person name="Takeuchi K."/>
            <person name="Arita M."/>
            <person name="Imose N."/>
            <person name="Musashino K."/>
            <person name="Yuuki H."/>
            <person name="Oshima A."/>
            <person name="Sasaki N."/>
            <person name="Aotsuka S."/>
            <person name="Yoshikawa Y."/>
            <person name="Matsunawa H."/>
            <person name="Ichihara T."/>
            <person name="Shiohata N."/>
            <person name="Sano S."/>
            <person name="Moriya S."/>
            <person name="Momiyama H."/>
            <person name="Satoh N."/>
            <person name="Takami S."/>
            <person name="Terashima Y."/>
            <person name="Suzuki O."/>
            <person name="Nakagawa S."/>
            <person name="Senoh A."/>
            <person name="Mizoguchi H."/>
            <person name="Goto Y."/>
            <person name="Shimizu F."/>
            <person name="Wakebe H."/>
            <person name="Hishigaki H."/>
            <person name="Watanabe T."/>
            <person name="Sugiyama A."/>
            <person name="Takemoto M."/>
            <person name="Kawakami B."/>
            <person name="Yamazaki M."/>
            <person name="Watanabe K."/>
            <person name="Kumagai A."/>
            <person name="Itakura S."/>
            <person name="Fukuzumi Y."/>
            <person name="Fujimori Y."/>
            <person name="Komiyama M."/>
            <person name="Tashiro H."/>
            <person name="Tanigami A."/>
            <person name="Fujiwara T."/>
            <person name="Ono T."/>
            <person name="Yamada K."/>
            <person name="Fujii Y."/>
            <person name="Ozaki K."/>
            <person name="Hirao M."/>
            <person name="Ohmori Y."/>
            <person name="Kawabata A."/>
            <person name="Hikiji T."/>
            <person name="Kobatake N."/>
            <person name="Inagaki H."/>
            <person name="Ikema Y."/>
            <person name="Okamoto S."/>
            <person name="Okitani R."/>
            <person name="Kawakami T."/>
            <person name="Noguchi S."/>
            <person name="Itoh T."/>
            <person name="Shigeta K."/>
            <person name="Senba T."/>
            <person name="Matsumura K."/>
            <person name="Nakajima Y."/>
            <person name="Mizuno T."/>
            <person name="Morinaga M."/>
            <person name="Sasaki M."/>
            <person name="Togashi T."/>
            <person name="Oyama M."/>
            <person name="Hata H."/>
            <person name="Watanabe M."/>
            <person name="Komatsu T."/>
            <person name="Mizushima-Sugano J."/>
            <person name="Satoh T."/>
            <person name="Shirai Y."/>
            <person name="Takahashi Y."/>
            <person name="Nakagawa K."/>
            <person name="Okumura K."/>
            <person name="Nagase T."/>
            <person name="Nomura N."/>
            <person name="Kikuchi H."/>
            <person name="Masuho Y."/>
            <person name="Yamashita R."/>
            <person name="Nakai K."/>
            <person name="Yada T."/>
            <person name="Nakamura Y."/>
            <person name="Ohara O."/>
            <person name="Isogai T."/>
            <person name="Sugano S."/>
        </authorList>
    </citation>
    <scope>NUCLEOTIDE SEQUENCE [LARGE SCALE MRNA]</scope>
    <source>
        <tissue>Subthalamic nucleus</tissue>
    </source>
</reference>
<reference key="2">
    <citation type="journal article" date="2004" name="Genome Res.">
        <title>The status, quality, and expansion of the NIH full-length cDNA project: the Mammalian Gene Collection (MGC).</title>
        <authorList>
            <consortium name="The MGC Project Team"/>
        </authorList>
    </citation>
    <scope>NUCLEOTIDE SEQUENCE [LARGE SCALE MRNA]</scope>
</reference>
<dbReference type="EMBL" id="AK124947">
    <property type="protein sequence ID" value="BAC86003.1"/>
    <property type="molecule type" value="mRNA"/>
</dbReference>
<dbReference type="EMBL" id="BC121822">
    <property type="status" value="NOT_ANNOTATED_CDS"/>
    <property type="molecule type" value="mRNA"/>
</dbReference>
<dbReference type="EMBL" id="BC122872">
    <property type="status" value="NOT_ANNOTATED_CDS"/>
    <property type="molecule type" value="mRNA"/>
</dbReference>
<dbReference type="IntAct" id="Q6ZV60">
    <property type="interactions" value="1"/>
</dbReference>
<dbReference type="BioMuta" id="HGNC:33791"/>
<dbReference type="AGR" id="HGNC:33791"/>
<dbReference type="GeneCards" id="LINC00173"/>
<dbReference type="HGNC" id="HGNC:33791">
    <property type="gene designation" value="LINC00173"/>
</dbReference>
<dbReference type="neXtProt" id="NX_Q6ZV60"/>
<dbReference type="InParanoid" id="Q6ZV60"/>
<dbReference type="PAN-GO" id="Q6ZV60">
    <property type="GO annotations" value="0 GO annotations based on evolutionary models"/>
</dbReference>
<dbReference type="PathwayCommons" id="Q6ZV60"/>
<dbReference type="SignaLink" id="Q6ZV60"/>
<dbReference type="ChiTaRS" id="LINC00173">
    <property type="organism name" value="human"/>
</dbReference>
<dbReference type="Pharos" id="Q6ZV60">
    <property type="development level" value="Tdark"/>
</dbReference>
<dbReference type="Proteomes" id="UP000005640">
    <property type="component" value="Unplaced"/>
</dbReference>
<dbReference type="RNAct" id="Q6ZV60">
    <property type="molecule type" value="protein"/>
</dbReference>